<comment type="function">
    <text evidence="3 4">Neuronal phosphoprotein that coats synaptic vesicles. Plays a role in the establishment of functional synaptic connections and in the regulation of their activity-dependent short-term plasticity.</text>
</comment>
<comment type="subcellular location">
    <subcellularLocation>
        <location evidence="3 4">Synapse</location>
    </subcellularLocation>
    <subcellularLocation>
        <location evidence="3 4">Cell projection</location>
    </subcellularLocation>
    <text evidence="3 4">Localized in the contact area between the pre- and postsynaptic cells and in varicose structures along presynaptic neurites projecting onto the postsynaptic cell.</text>
</comment>
<comment type="PTM">
    <text evidence="3 4">Ser-9 is likely to be phosphorylated by CaMK1/4 and/or PKA. It is probable that the phosphorylation plays a role in short-term synaptic enhancement (STE). Ser-36 and/or Ser-42 are likely to be phosphorylated by MAPK; the phosphorylation may play a dual role in regulating both functional synapse formation and their activity-dependent short-term plasticity.</text>
</comment>
<comment type="similarity">
    <text evidence="1">Belongs to the synapsin family.</text>
</comment>
<organism>
    <name type="scientific">Helix pomatia</name>
    <name type="common">Roman snail</name>
    <name type="synonym">Edible snail</name>
    <dbReference type="NCBI Taxonomy" id="6536"/>
    <lineage>
        <taxon>Eukaryota</taxon>
        <taxon>Metazoa</taxon>
        <taxon>Spiralia</taxon>
        <taxon>Lophotrochozoa</taxon>
        <taxon>Mollusca</taxon>
        <taxon>Gastropoda</taxon>
        <taxon>Heterobranchia</taxon>
        <taxon>Euthyneura</taxon>
        <taxon>Panpulmonata</taxon>
        <taxon>Eupulmonata</taxon>
        <taxon>Stylommatophora</taxon>
        <taxon>Helicina</taxon>
        <taxon>Helicoidea</taxon>
        <taxon>Helicidae</taxon>
        <taxon>Helix</taxon>
    </lineage>
</organism>
<dbReference type="EMBL" id="AY533823">
    <property type="protein sequence ID" value="AAS45543.1"/>
    <property type="molecule type" value="mRNA"/>
</dbReference>
<dbReference type="SMR" id="Q6QM28"/>
<dbReference type="iPTMnet" id="Q6QM28"/>
<dbReference type="GO" id="GO:0042995">
    <property type="term" value="C:cell projection"/>
    <property type="evidence" value="ECO:0007669"/>
    <property type="project" value="UniProtKB-SubCell"/>
</dbReference>
<dbReference type="GO" id="GO:0030672">
    <property type="term" value="C:synaptic vesicle membrane"/>
    <property type="evidence" value="ECO:0007669"/>
    <property type="project" value="TreeGrafter"/>
</dbReference>
<dbReference type="GO" id="GO:0005524">
    <property type="term" value="F:ATP binding"/>
    <property type="evidence" value="ECO:0007669"/>
    <property type="project" value="InterPro"/>
</dbReference>
<dbReference type="GO" id="GO:0046872">
    <property type="term" value="F:metal ion binding"/>
    <property type="evidence" value="ECO:0007669"/>
    <property type="project" value="InterPro"/>
</dbReference>
<dbReference type="GO" id="GO:0007269">
    <property type="term" value="P:neurotransmitter secretion"/>
    <property type="evidence" value="ECO:0007669"/>
    <property type="project" value="InterPro"/>
</dbReference>
<dbReference type="FunFam" id="3.40.50.20:FF:000008">
    <property type="entry name" value="Synapsin III"/>
    <property type="match status" value="1"/>
</dbReference>
<dbReference type="FunFam" id="3.30.470.20:FF:000151">
    <property type="entry name" value="Synapsin-2"/>
    <property type="match status" value="1"/>
</dbReference>
<dbReference type="Gene3D" id="3.40.50.20">
    <property type="match status" value="1"/>
</dbReference>
<dbReference type="Gene3D" id="3.30.1490.20">
    <property type="entry name" value="ATP-grasp fold, A domain"/>
    <property type="match status" value="1"/>
</dbReference>
<dbReference type="Gene3D" id="3.30.470.20">
    <property type="entry name" value="ATP-grasp fold, B domain"/>
    <property type="match status" value="1"/>
</dbReference>
<dbReference type="InterPro" id="IPR011761">
    <property type="entry name" value="ATP-grasp"/>
</dbReference>
<dbReference type="InterPro" id="IPR013815">
    <property type="entry name" value="ATP_grasp_subdomain_1"/>
</dbReference>
<dbReference type="InterPro" id="IPR016185">
    <property type="entry name" value="PreATP-grasp_dom_sf"/>
</dbReference>
<dbReference type="InterPro" id="IPR001359">
    <property type="entry name" value="Synapsin"/>
</dbReference>
<dbReference type="InterPro" id="IPR020898">
    <property type="entry name" value="Synapsin_ATP-bd_dom"/>
</dbReference>
<dbReference type="InterPro" id="IPR020897">
    <property type="entry name" value="Synapsin_pre-ATP-grasp_dom"/>
</dbReference>
<dbReference type="PANTHER" id="PTHR10841">
    <property type="entry name" value="SYNAPSIN"/>
    <property type="match status" value="1"/>
</dbReference>
<dbReference type="PANTHER" id="PTHR10841:SF17">
    <property type="entry name" value="SYNAPSIN"/>
    <property type="match status" value="1"/>
</dbReference>
<dbReference type="Pfam" id="PF02078">
    <property type="entry name" value="Synapsin"/>
    <property type="match status" value="1"/>
</dbReference>
<dbReference type="Pfam" id="PF02750">
    <property type="entry name" value="Synapsin_C"/>
    <property type="match status" value="1"/>
</dbReference>
<dbReference type="PRINTS" id="PR01368">
    <property type="entry name" value="SYNAPSIN"/>
</dbReference>
<dbReference type="SUPFAM" id="SSF56059">
    <property type="entry name" value="Glutathione synthetase ATP-binding domain-like"/>
    <property type="match status" value="1"/>
</dbReference>
<dbReference type="SUPFAM" id="SSF52440">
    <property type="entry name" value="PreATP-grasp domain"/>
    <property type="match status" value="1"/>
</dbReference>
<feature type="chain" id="PRO_0000423430" description="Synapsin">
    <location>
        <begin position="1"/>
        <end position="496"/>
    </location>
</feature>
<feature type="region of interest" description="Disordered" evidence="2">
    <location>
        <begin position="1"/>
        <end position="51"/>
    </location>
</feature>
<feature type="region of interest" description="Disordered" evidence="2">
    <location>
        <begin position="377"/>
        <end position="482"/>
    </location>
</feature>
<feature type="compositionally biased region" description="Low complexity" evidence="2">
    <location>
        <begin position="32"/>
        <end position="50"/>
    </location>
</feature>
<feature type="compositionally biased region" description="Polar residues" evidence="2">
    <location>
        <begin position="379"/>
        <end position="396"/>
    </location>
</feature>
<feature type="compositionally biased region" description="Low complexity" evidence="2">
    <location>
        <begin position="428"/>
        <end position="441"/>
    </location>
</feature>
<feature type="compositionally biased region" description="Polar residues" evidence="2">
    <location>
        <begin position="442"/>
        <end position="453"/>
    </location>
</feature>
<feature type="modified residue" description="Phosphoserine; by PKA, CaMK1 and CaMK4" evidence="3">
    <location>
        <position position="9"/>
    </location>
</feature>
<feature type="modified residue" description="Phosphoserine; by MAPK" evidence="4">
    <location>
        <position position="36"/>
    </location>
</feature>
<feature type="modified residue" description="Phosphoserine; by MAPK" evidence="4">
    <location>
        <position position="42"/>
    </location>
</feature>
<feature type="mutagenesis site" description="Impairs post-tetanic potentiation (PTP) at synapses." evidence="3">
    <original>S</original>
    <variation>A</variation>
    <location>
        <position position="9"/>
    </location>
</feature>
<feature type="mutagenesis site" description="Decreased phosphorylation and more clustered distribution pattern; when associated with A-42." evidence="4">
    <original>S</original>
    <variation>A</variation>
    <location>
        <position position="36"/>
    </location>
</feature>
<feature type="mutagenesis site" description="Diffused and uniform distribution pattern; when associated with E-42." evidence="4">
    <original>S</original>
    <variation>D</variation>
    <location>
        <position position="36"/>
    </location>
</feature>
<feature type="mutagenesis site" description="Decreased phosphorylation and more clustered distribution pattern; when associated with A-36." evidence="4">
    <original>S</original>
    <variation>A</variation>
    <location>
        <position position="42"/>
    </location>
</feature>
<feature type="mutagenesis site" description="Diffused and uniform distribution pattern; when associated with D-36." evidence="4">
    <original>S</original>
    <variation>E</variation>
    <location>
        <position position="42"/>
    </location>
</feature>
<name>SYN_HELPO</name>
<evidence type="ECO:0000255" key="1"/>
<evidence type="ECO:0000256" key="2">
    <source>
        <dbReference type="SAM" id="MobiDB-lite"/>
    </source>
</evidence>
<evidence type="ECO:0000269" key="3">
    <source>
    </source>
</evidence>
<evidence type="ECO:0000269" key="4">
    <source>
    </source>
</evidence>
<evidence type="ECO:0000303" key="5">
    <source>
    </source>
</evidence>
<evidence type="ECO:0000303" key="6">
    <source>
    </source>
</evidence>
<evidence type="ECO:0000305" key="7"/>
<evidence type="ECO:0000312" key="8">
    <source>
        <dbReference type="EMBL" id="AAS45543.1"/>
    </source>
</evidence>
<sequence length="496" mass="54417">MNFLRRRFSSGDLQGEANEKEDPPNVGILNFKKGPSPSAPNSPSKSASPATIGQKLFSGTVGVKPVSKDRYKTLLVIDGQHTDWSKYFKGKKLFGDWDVKVEQAEFSELNLASNSETGTTVEIQAIRNGNKTTRSLKPDFLLIRQHVRDAKVDWRHLLLGFRYGGVPSINSLTAEFNFLDKPWVFAQLIDIQKRLSKDVFPLIDQTYFSNHEEMLNSPKFPLVVKIGHAHRGLGKIKVDNVQTLEDLASVMATMSSYATTEPFIDSKYDIHVQKIGTNYKAYLRKSIAGNWKANTGSAMLEQIPMDERFKLWADECSQLFGGLDVVSVEAIQGKDGRDHIIEVNGSSMALLGEAQEEDRRLISEMVMAKMQMMCKPAQQPLSKASSSQSITPQANGAQKPVLAASPSRQAQGRPLDTSAQATPGQARGPPSSGGLPGVSNSQTPLSNQPSHLSNPPPQPFPTSTSGPQGLPRMASKDEEDTMKNLRKTFAGIFGDV</sequence>
<gene>
    <name evidence="6" type="primary">SYN</name>
</gene>
<protein>
    <recommendedName>
        <fullName evidence="8">Synapsin</fullName>
        <shortName evidence="5">helSyn</shortName>
    </recommendedName>
</protein>
<accession>Q6QM28</accession>
<proteinExistence type="evidence at protein level"/>
<keyword id="KW-0966">Cell projection</keyword>
<keyword id="KW-0597">Phosphoprotein</keyword>
<keyword id="KW-0770">Synapse</keyword>
<reference evidence="7 8" key="1">
    <citation type="journal article" date="2007" name="J. Cell Sci.">
        <title>Phosphorylation of synapsin domain A is required for post-tetanic potentiation.</title>
        <authorList>
            <person name="Fiumara F."/>
            <person name="Milanese C."/>
            <person name="Corradi A."/>
            <person name="Giovedi S."/>
            <person name="Leitinger G."/>
            <person name="Menegon A."/>
            <person name="Montarolo P.G."/>
            <person name="Benfenati F."/>
            <person name="Ghirardi M."/>
        </authorList>
    </citation>
    <scope>NUCLEOTIDE SEQUENCE [MRNA]</scope>
    <scope>FUNCTION</scope>
    <scope>SUBCELLULAR LOCATION</scope>
    <scope>PHOSPHORYLATION AT SER-9</scope>
    <scope>MUTAGENESIS OF SER-9</scope>
    <source>
        <tissue evidence="3">Nervous system</tissue>
    </source>
</reference>
<reference evidence="7" key="2">
    <citation type="journal article" date="2010" name="J. Cell Sci.">
        <title>MAPK/Erk-dependent phosphorylation of synapsin mediates formation of functional synapses and short-term homosynaptic plasticity.</title>
        <authorList>
            <person name="Giachello C.N."/>
            <person name="Fiumara F."/>
            <person name="Giacomini C."/>
            <person name="Corradi A."/>
            <person name="Milanese C."/>
            <person name="Ghirardi M."/>
            <person name="Benfenati F."/>
            <person name="Montarolo P.G."/>
        </authorList>
    </citation>
    <scope>FUNCTION</scope>
    <scope>SUBCELLULAR LOCATION</scope>
    <scope>PHOSPHORYLATION AT SER-36 AND SER-42</scope>
    <scope>MUTAGENESIS OF SER-36 AND SER-42</scope>
</reference>